<keyword id="KW-0007">Acetylation</keyword>
<keyword id="KW-0143">Chaperone</keyword>
<keyword id="KW-0963">Cytoplasm</keyword>
<keyword id="KW-0256">Endoplasmic reticulum</keyword>
<keyword id="KW-0597">Phosphoprotein</keyword>
<keyword id="KW-1185">Reference proteome</keyword>
<sequence length="288" mass="33015">MAATFFGEVVRTPCRAGTEEEEEEEDGNRETPEDREVRRQLARKREVRLFRRQTKTTLEVSLLEKHPCSKFIIAIGNNAVAFLSSFVMNSGAWEEVGCAKLWNEWCRTTDTAHLSPTEAFCVFYHLKSNPSVMLCQCSCYVAEDQQYQWLEKVFGSCPRKNMQVTILTCRHVTDYKTSESTSSLHTPFLKALKTQNFKEPPFCSLLEQPNIVHDLPAAVLSYCQVWRIPAVLYLCYTDVMKLDLITIEAFKPVLSSKSLKCLVKNIPQSTEILKKLMTTNEIQSNIYT</sequence>
<name>PSMG1_BOVIN</name>
<organism>
    <name type="scientific">Bos taurus</name>
    <name type="common">Bovine</name>
    <dbReference type="NCBI Taxonomy" id="9913"/>
    <lineage>
        <taxon>Eukaryota</taxon>
        <taxon>Metazoa</taxon>
        <taxon>Chordata</taxon>
        <taxon>Craniata</taxon>
        <taxon>Vertebrata</taxon>
        <taxon>Euteleostomi</taxon>
        <taxon>Mammalia</taxon>
        <taxon>Eutheria</taxon>
        <taxon>Laurasiatheria</taxon>
        <taxon>Artiodactyla</taxon>
        <taxon>Ruminantia</taxon>
        <taxon>Pecora</taxon>
        <taxon>Bovidae</taxon>
        <taxon>Bovinae</taxon>
        <taxon>Bos</taxon>
    </lineage>
</organism>
<evidence type="ECO:0000250" key="1">
    <source>
        <dbReference type="UniProtKB" id="O95456"/>
    </source>
</evidence>
<evidence type="ECO:0000255" key="2"/>
<evidence type="ECO:0000256" key="3">
    <source>
        <dbReference type="SAM" id="MobiDB-lite"/>
    </source>
</evidence>
<evidence type="ECO:0000312" key="4">
    <source>
        <dbReference type="EMBL" id="AAI20127.1"/>
    </source>
</evidence>
<protein>
    <recommendedName>
        <fullName>Proteasome assembly chaperone 1</fullName>
    </recommendedName>
</protein>
<accession>Q0P5F2</accession>
<reference evidence="4" key="1">
    <citation type="submission" date="2006-08" db="EMBL/GenBank/DDBJ databases">
        <authorList>
            <consortium name="NIH - Mammalian Gene Collection (MGC) project"/>
        </authorList>
    </citation>
    <scope>NUCLEOTIDE SEQUENCE [LARGE SCALE MRNA]</scope>
    <source>
        <strain evidence="4">Hereford</strain>
        <tissue evidence="4">Fetal cerebellum</tissue>
    </source>
</reference>
<feature type="initiator methionine" description="Removed" evidence="1">
    <location>
        <position position="1"/>
    </location>
</feature>
<feature type="chain" id="PRO_0000322546" description="Proteasome assembly chaperone 1">
    <location>
        <begin position="2"/>
        <end position="288"/>
    </location>
</feature>
<feature type="region of interest" description="Disordered" evidence="3">
    <location>
        <begin position="12"/>
        <end position="38"/>
    </location>
</feature>
<feature type="compositionally biased region" description="Basic and acidic residues" evidence="3">
    <location>
        <begin position="28"/>
        <end position="38"/>
    </location>
</feature>
<feature type="modified residue" description="N-acetylalanine" evidence="1">
    <location>
        <position position="2"/>
    </location>
</feature>
<feature type="modified residue" description="Phosphothreonine" evidence="1">
    <location>
        <position position="18"/>
    </location>
</feature>
<feature type="modified residue" description="Phosphothreonine" evidence="1">
    <location>
        <position position="54"/>
    </location>
</feature>
<feature type="modified residue" description="Phosphoserine" evidence="1">
    <location>
        <position position="180"/>
    </location>
</feature>
<feature type="modified residue" description="N6-acetyllysine" evidence="1">
    <location>
        <position position="264"/>
    </location>
</feature>
<gene>
    <name evidence="1" type="primary">PSMG1</name>
</gene>
<dbReference type="EMBL" id="BC120126">
    <property type="protein sequence ID" value="AAI20127.1"/>
    <property type="molecule type" value="mRNA"/>
</dbReference>
<dbReference type="RefSeq" id="NP_001069815.1">
    <property type="nucleotide sequence ID" value="NM_001076347.1"/>
</dbReference>
<dbReference type="SMR" id="Q0P5F2"/>
<dbReference type="FunCoup" id="Q0P5F2">
    <property type="interactions" value="2687"/>
</dbReference>
<dbReference type="STRING" id="9913.ENSBTAP00000018085"/>
<dbReference type="PaxDb" id="9913-ENSBTAP00000018085"/>
<dbReference type="Ensembl" id="ENSBTAT00000018085.5">
    <property type="protein sequence ID" value="ENSBTAP00000018085.4"/>
    <property type="gene ID" value="ENSBTAG00000013600.6"/>
</dbReference>
<dbReference type="GeneID" id="614817"/>
<dbReference type="KEGG" id="bta:614817"/>
<dbReference type="CTD" id="8624"/>
<dbReference type="VEuPathDB" id="HostDB:ENSBTAG00000013600"/>
<dbReference type="VGNC" id="VGNC:33478">
    <property type="gene designation" value="PSMG1"/>
</dbReference>
<dbReference type="eggNOG" id="ENOG502QTPH">
    <property type="taxonomic scope" value="Eukaryota"/>
</dbReference>
<dbReference type="GeneTree" id="ENSGT00500000044950"/>
<dbReference type="HOGENOM" id="CLU_083637_0_0_1"/>
<dbReference type="InParanoid" id="Q0P5F2"/>
<dbReference type="OMA" id="SVLICQV"/>
<dbReference type="OrthoDB" id="17536at2759"/>
<dbReference type="TreeFam" id="TF331909"/>
<dbReference type="Reactome" id="R-BTA-9907900">
    <property type="pathway name" value="Proteasome assembly"/>
</dbReference>
<dbReference type="Proteomes" id="UP000009136">
    <property type="component" value="Chromosome 1"/>
</dbReference>
<dbReference type="Bgee" id="ENSBTAG00000013600">
    <property type="expression patterns" value="Expressed in oocyte and 105 other cell types or tissues"/>
</dbReference>
<dbReference type="GO" id="GO:0005737">
    <property type="term" value="C:cytoplasm"/>
    <property type="evidence" value="ECO:0000250"/>
    <property type="project" value="UniProtKB"/>
</dbReference>
<dbReference type="GO" id="GO:0005783">
    <property type="term" value="C:endoplasmic reticulum"/>
    <property type="evidence" value="ECO:0000250"/>
    <property type="project" value="UniProtKB"/>
</dbReference>
<dbReference type="GO" id="GO:0070628">
    <property type="term" value="F:proteasome binding"/>
    <property type="evidence" value="ECO:0000318"/>
    <property type="project" value="GO_Central"/>
</dbReference>
<dbReference type="GO" id="GO:0051131">
    <property type="term" value="P:chaperone-mediated protein complex assembly"/>
    <property type="evidence" value="ECO:0000250"/>
    <property type="project" value="UniProtKB"/>
</dbReference>
<dbReference type="GO" id="GO:0080129">
    <property type="term" value="P:proteasome core complex assembly"/>
    <property type="evidence" value="ECO:0000318"/>
    <property type="project" value="GO_Central"/>
</dbReference>
<dbReference type="InterPro" id="IPR016565">
    <property type="entry name" value="Proteasome_assmbl_chp_1"/>
</dbReference>
<dbReference type="PANTHER" id="PTHR15069">
    <property type="entry name" value="PROTEASOME ASSEMBLY CHAPERONE 1"/>
    <property type="match status" value="1"/>
</dbReference>
<dbReference type="PANTHER" id="PTHR15069:SF1">
    <property type="entry name" value="PROTEASOME ASSEMBLY CHAPERONE 1"/>
    <property type="match status" value="1"/>
</dbReference>
<dbReference type="Pfam" id="PF16094">
    <property type="entry name" value="PAC1"/>
    <property type="match status" value="1"/>
</dbReference>
<dbReference type="PIRSF" id="PIRSF010076">
    <property type="entry name" value="Psome_chaperone-1"/>
    <property type="match status" value="1"/>
</dbReference>
<comment type="function">
    <text evidence="1">Chaperone protein which promotes assembly of the 20S proteasome as part of a heterodimer with PSMG2. The PSMG1-PSMG2 heterodimer binds to the PSMA5 and PSMA7 proteasome subunits, promotes assembly of the proteasome alpha subunits into the heteroheptameric alpha ring and prevents alpha ring dimerization (By similarity).</text>
</comment>
<comment type="subunit">
    <text evidence="1">Forms a heterodimer with PSMG2. The PSMG1-PSMG2 heterodimer interacts directly with the PSMA5 and PSMA7 proteasome alpha subunits (By similarity).</text>
</comment>
<comment type="subcellular location">
    <subcellularLocation>
        <location evidence="1">Cytoplasm</location>
    </subcellularLocation>
    <subcellularLocation>
        <location evidence="1">Endoplasmic reticulum</location>
    </subcellularLocation>
</comment>
<comment type="PTM">
    <text evidence="1">Degraded by the proteasome upon completion of 20S proteasome maturation.</text>
</comment>
<comment type="similarity">
    <text evidence="2">Belongs to the PSMG1 family.</text>
</comment>
<proteinExistence type="evidence at transcript level"/>